<reference key="1">
    <citation type="journal article" date="2008" name="J. Bacteriol.">
        <title>Genome sequence of the chemolithoautotrophic bacterium Oligotropha carboxidovorans OM5T.</title>
        <authorList>
            <person name="Paul D."/>
            <person name="Bridges S."/>
            <person name="Burgess S.C."/>
            <person name="Dandass Y."/>
            <person name="Lawrence M.L."/>
        </authorList>
    </citation>
    <scope>NUCLEOTIDE SEQUENCE [LARGE SCALE GENOMIC DNA]</scope>
    <source>
        <strain>ATCC 49405 / DSM 1227 / KCTC 32145 / OM5</strain>
    </source>
</reference>
<reference key="2">
    <citation type="journal article" date="2011" name="J. Bacteriol.">
        <title>Complete genome sequences of the chemolithoautotrophic Oligotropha carboxidovorans strains OM4 and OM5.</title>
        <authorList>
            <person name="Volland S."/>
            <person name="Rachinger M."/>
            <person name="Strittmatter A."/>
            <person name="Daniel R."/>
            <person name="Gottschalk G."/>
            <person name="Meyer O."/>
        </authorList>
    </citation>
    <scope>NUCLEOTIDE SEQUENCE [LARGE SCALE GENOMIC DNA]</scope>
    <source>
        <strain>ATCC 49405 / DSM 1227 / KCTC 32145 / OM5</strain>
    </source>
</reference>
<gene>
    <name evidence="1" type="primary">rpsI</name>
    <name type="ordered locus">OCAR_5896</name>
    <name type="ordered locus">OCA5_c21220</name>
</gene>
<comment type="similarity">
    <text evidence="1">Belongs to the universal ribosomal protein uS9 family.</text>
</comment>
<organism>
    <name type="scientific">Afipia carboxidovorans (strain ATCC 49405 / DSM 1227 / KCTC 32145 / OM5)</name>
    <name type="common">Oligotropha carboxidovorans</name>
    <dbReference type="NCBI Taxonomy" id="504832"/>
    <lineage>
        <taxon>Bacteria</taxon>
        <taxon>Pseudomonadati</taxon>
        <taxon>Pseudomonadota</taxon>
        <taxon>Alphaproteobacteria</taxon>
        <taxon>Hyphomicrobiales</taxon>
        <taxon>Nitrobacteraceae</taxon>
        <taxon>Afipia</taxon>
    </lineage>
</organism>
<feature type="chain" id="PRO_1000128147" description="Small ribosomal subunit protein uS9">
    <location>
        <begin position="1"/>
        <end position="158"/>
    </location>
</feature>
<feature type="region of interest" description="Disordered" evidence="2">
    <location>
        <begin position="1"/>
        <end position="35"/>
    </location>
</feature>
<feature type="compositionally biased region" description="Polar residues" evidence="2">
    <location>
        <begin position="1"/>
        <end position="10"/>
    </location>
</feature>
<feature type="compositionally biased region" description="Basic and acidic residues" evidence="2">
    <location>
        <begin position="21"/>
        <end position="32"/>
    </location>
</feature>
<dbReference type="EMBL" id="CP001196">
    <property type="protein sequence ID" value="ACI93020.1"/>
    <property type="molecule type" value="Genomic_DNA"/>
</dbReference>
<dbReference type="EMBL" id="CP002826">
    <property type="protein sequence ID" value="AEI06826.1"/>
    <property type="molecule type" value="Genomic_DNA"/>
</dbReference>
<dbReference type="RefSeq" id="WP_012563047.1">
    <property type="nucleotide sequence ID" value="NC_015684.1"/>
</dbReference>
<dbReference type="SMR" id="B6JGT6"/>
<dbReference type="STRING" id="504832.OCA5_c21220"/>
<dbReference type="KEGG" id="oca:OCAR_5896"/>
<dbReference type="KEGG" id="ocg:OCA5_c21220"/>
<dbReference type="PATRIC" id="fig|504832.7.peg.2243"/>
<dbReference type="eggNOG" id="COG0103">
    <property type="taxonomic scope" value="Bacteria"/>
</dbReference>
<dbReference type="HOGENOM" id="CLU_046483_2_0_5"/>
<dbReference type="OrthoDB" id="9803965at2"/>
<dbReference type="Proteomes" id="UP000007730">
    <property type="component" value="Chromosome"/>
</dbReference>
<dbReference type="GO" id="GO:0022627">
    <property type="term" value="C:cytosolic small ribosomal subunit"/>
    <property type="evidence" value="ECO:0007669"/>
    <property type="project" value="TreeGrafter"/>
</dbReference>
<dbReference type="GO" id="GO:0003723">
    <property type="term" value="F:RNA binding"/>
    <property type="evidence" value="ECO:0007669"/>
    <property type="project" value="TreeGrafter"/>
</dbReference>
<dbReference type="GO" id="GO:0003735">
    <property type="term" value="F:structural constituent of ribosome"/>
    <property type="evidence" value="ECO:0007669"/>
    <property type="project" value="InterPro"/>
</dbReference>
<dbReference type="GO" id="GO:0006412">
    <property type="term" value="P:translation"/>
    <property type="evidence" value="ECO:0007669"/>
    <property type="project" value="UniProtKB-UniRule"/>
</dbReference>
<dbReference type="FunFam" id="3.30.230.10:FF:000034">
    <property type="entry name" value="30S ribosomal protein S9"/>
    <property type="match status" value="1"/>
</dbReference>
<dbReference type="Gene3D" id="3.30.230.10">
    <property type="match status" value="1"/>
</dbReference>
<dbReference type="HAMAP" id="MF_00532_B">
    <property type="entry name" value="Ribosomal_uS9_B"/>
    <property type="match status" value="1"/>
</dbReference>
<dbReference type="InterPro" id="IPR020568">
    <property type="entry name" value="Ribosomal_Su5_D2-typ_SF"/>
</dbReference>
<dbReference type="InterPro" id="IPR000754">
    <property type="entry name" value="Ribosomal_uS9"/>
</dbReference>
<dbReference type="InterPro" id="IPR023035">
    <property type="entry name" value="Ribosomal_uS9_bac/plastid"/>
</dbReference>
<dbReference type="InterPro" id="IPR020574">
    <property type="entry name" value="Ribosomal_uS9_CS"/>
</dbReference>
<dbReference type="InterPro" id="IPR014721">
    <property type="entry name" value="Ribsml_uS5_D2-typ_fold_subgr"/>
</dbReference>
<dbReference type="NCBIfam" id="NF001099">
    <property type="entry name" value="PRK00132.1"/>
    <property type="match status" value="1"/>
</dbReference>
<dbReference type="PANTHER" id="PTHR21569">
    <property type="entry name" value="RIBOSOMAL PROTEIN S9"/>
    <property type="match status" value="1"/>
</dbReference>
<dbReference type="PANTHER" id="PTHR21569:SF1">
    <property type="entry name" value="SMALL RIBOSOMAL SUBUNIT PROTEIN US9M"/>
    <property type="match status" value="1"/>
</dbReference>
<dbReference type="Pfam" id="PF00380">
    <property type="entry name" value="Ribosomal_S9"/>
    <property type="match status" value="1"/>
</dbReference>
<dbReference type="SUPFAM" id="SSF54211">
    <property type="entry name" value="Ribosomal protein S5 domain 2-like"/>
    <property type="match status" value="1"/>
</dbReference>
<dbReference type="PROSITE" id="PS00360">
    <property type="entry name" value="RIBOSOMAL_S9"/>
    <property type="match status" value="1"/>
</dbReference>
<name>RS9_AFIC5</name>
<proteinExistence type="inferred from homology"/>
<accession>B6JGT6</accession>
<accession>F8BX49</accession>
<keyword id="KW-1185">Reference proteome</keyword>
<keyword id="KW-0687">Ribonucleoprotein</keyword>
<keyword id="KW-0689">Ribosomal protein</keyword>
<protein>
    <recommendedName>
        <fullName evidence="1">Small ribosomal subunit protein uS9</fullName>
    </recommendedName>
    <alternativeName>
        <fullName evidence="3">30S ribosomal protein S9</fullName>
    </alternativeName>
</protein>
<evidence type="ECO:0000255" key="1">
    <source>
        <dbReference type="HAMAP-Rule" id="MF_00532"/>
    </source>
</evidence>
<evidence type="ECO:0000256" key="2">
    <source>
        <dbReference type="SAM" id="MobiDB-lite"/>
    </source>
</evidence>
<evidence type="ECO:0000305" key="3"/>
<sequence length="158" mass="17322">MSDTMQSLDQLSALKTAAPDAPKREKKVDKQGRAYATGKRKDAVARVWIKPGSGKIVVNTRDVEVYFARPVLRMLIQQPIVAAARQGQYDVVATVAGGGLSGQAGAVRHGISKALTHFEPDLRGVLKKGGFLTRDSRVVERKKYGKAKARRSFQFSKR</sequence>